<organism>
    <name type="scientific">Shewanella sp. (strain MR-7)</name>
    <dbReference type="NCBI Taxonomy" id="60481"/>
    <lineage>
        <taxon>Bacteria</taxon>
        <taxon>Pseudomonadati</taxon>
        <taxon>Pseudomonadota</taxon>
        <taxon>Gammaproteobacteria</taxon>
        <taxon>Alteromonadales</taxon>
        <taxon>Shewanellaceae</taxon>
        <taxon>Shewanella</taxon>
    </lineage>
</organism>
<protein>
    <recommendedName>
        <fullName evidence="1">K(+)/H(+) antiporter NhaP2</fullName>
    </recommendedName>
    <alternativeName>
        <fullName evidence="1">Potassium/proton antiporter NhaP2</fullName>
    </alternativeName>
</protein>
<reference key="1">
    <citation type="submission" date="2006-08" db="EMBL/GenBank/DDBJ databases">
        <title>Complete sequence of chromosome 1 of Shewanella sp. MR-7.</title>
        <authorList>
            <person name="Copeland A."/>
            <person name="Lucas S."/>
            <person name="Lapidus A."/>
            <person name="Barry K."/>
            <person name="Detter J.C."/>
            <person name="Glavina del Rio T."/>
            <person name="Hammon N."/>
            <person name="Israni S."/>
            <person name="Dalin E."/>
            <person name="Tice H."/>
            <person name="Pitluck S."/>
            <person name="Kiss H."/>
            <person name="Brettin T."/>
            <person name="Bruce D."/>
            <person name="Han C."/>
            <person name="Tapia R."/>
            <person name="Gilna P."/>
            <person name="Schmutz J."/>
            <person name="Larimer F."/>
            <person name="Land M."/>
            <person name="Hauser L."/>
            <person name="Kyrpides N."/>
            <person name="Mikhailova N."/>
            <person name="Nealson K."/>
            <person name="Konstantinidis K."/>
            <person name="Klappenbach J."/>
            <person name="Tiedje J."/>
            <person name="Richardson P."/>
        </authorList>
    </citation>
    <scope>NUCLEOTIDE SEQUENCE [LARGE SCALE GENOMIC DNA]</scope>
    <source>
        <strain>MR-7</strain>
    </source>
</reference>
<proteinExistence type="inferred from homology"/>
<dbReference type="EMBL" id="CP000444">
    <property type="protein sequence ID" value="ABI41883.1"/>
    <property type="molecule type" value="Genomic_DNA"/>
</dbReference>
<dbReference type="SMR" id="Q0HYC2"/>
<dbReference type="KEGG" id="shm:Shewmr7_0884"/>
<dbReference type="HOGENOM" id="CLU_005912_9_2_6"/>
<dbReference type="GO" id="GO:0005886">
    <property type="term" value="C:plasma membrane"/>
    <property type="evidence" value="ECO:0007669"/>
    <property type="project" value="UniProtKB-SubCell"/>
</dbReference>
<dbReference type="GO" id="GO:0050660">
    <property type="term" value="F:flavin adenine dinucleotide binding"/>
    <property type="evidence" value="ECO:0007669"/>
    <property type="project" value="InterPro"/>
</dbReference>
<dbReference type="GO" id="GO:0015386">
    <property type="term" value="F:potassium:proton antiporter activity"/>
    <property type="evidence" value="ECO:0007669"/>
    <property type="project" value="UniProtKB-UniRule"/>
</dbReference>
<dbReference type="GO" id="GO:0006884">
    <property type="term" value="P:cell volume homeostasis"/>
    <property type="evidence" value="ECO:0007669"/>
    <property type="project" value="InterPro"/>
</dbReference>
<dbReference type="Gene3D" id="1.20.1530.20">
    <property type="match status" value="1"/>
</dbReference>
<dbReference type="Gene3D" id="3.30.70.1450">
    <property type="entry name" value="Regulator of K+ conductance, C-terminal domain"/>
    <property type="match status" value="1"/>
</dbReference>
<dbReference type="HAMAP" id="MF_01075">
    <property type="entry name" value="NhaP2"/>
    <property type="match status" value="1"/>
</dbReference>
<dbReference type="InterPro" id="IPR006153">
    <property type="entry name" value="Cation/H_exchanger_TM"/>
</dbReference>
<dbReference type="InterPro" id="IPR036318">
    <property type="entry name" value="FAD-bd_PCMH-like_sf"/>
</dbReference>
<dbReference type="InterPro" id="IPR038770">
    <property type="entry name" value="Na+/solute_symporter_sf"/>
</dbReference>
<dbReference type="InterPro" id="IPR023729">
    <property type="entry name" value="NhaP2"/>
</dbReference>
<dbReference type="InterPro" id="IPR006037">
    <property type="entry name" value="RCK_C"/>
</dbReference>
<dbReference type="InterPro" id="IPR036721">
    <property type="entry name" value="RCK_C_sf"/>
</dbReference>
<dbReference type="InterPro" id="IPR005170">
    <property type="entry name" value="Transptr-assoc_dom"/>
</dbReference>
<dbReference type="NCBIfam" id="NF003714">
    <property type="entry name" value="PRK05326.1-1"/>
    <property type="match status" value="1"/>
</dbReference>
<dbReference type="NCBIfam" id="NF003715">
    <property type="entry name" value="PRK05326.1-2"/>
    <property type="match status" value="1"/>
</dbReference>
<dbReference type="NCBIfam" id="NF003716">
    <property type="entry name" value="PRK05326.1-3"/>
    <property type="match status" value="1"/>
</dbReference>
<dbReference type="PANTHER" id="PTHR32507:SF7">
    <property type="entry name" value="K(+)_H(+) ANTIPORTER NHAP2"/>
    <property type="match status" value="1"/>
</dbReference>
<dbReference type="PANTHER" id="PTHR32507">
    <property type="entry name" value="NA(+)/H(+) ANTIPORTER 1"/>
    <property type="match status" value="1"/>
</dbReference>
<dbReference type="Pfam" id="PF03471">
    <property type="entry name" value="CorC_HlyC"/>
    <property type="match status" value="1"/>
</dbReference>
<dbReference type="Pfam" id="PF00999">
    <property type="entry name" value="Na_H_Exchanger"/>
    <property type="match status" value="1"/>
</dbReference>
<dbReference type="Pfam" id="PF02080">
    <property type="entry name" value="TrkA_C"/>
    <property type="match status" value="1"/>
</dbReference>
<dbReference type="SMART" id="SM01091">
    <property type="entry name" value="CorC_HlyC"/>
    <property type="match status" value="1"/>
</dbReference>
<dbReference type="SUPFAM" id="SSF56176">
    <property type="entry name" value="FAD-binding/transporter-associated domain-like"/>
    <property type="match status" value="1"/>
</dbReference>
<dbReference type="SUPFAM" id="SSF116726">
    <property type="entry name" value="TrkA C-terminal domain-like"/>
    <property type="match status" value="1"/>
</dbReference>
<dbReference type="PROSITE" id="PS51202">
    <property type="entry name" value="RCK_C"/>
    <property type="match status" value="1"/>
</dbReference>
<name>NHAP2_SHESR</name>
<keyword id="KW-0050">Antiport</keyword>
<keyword id="KW-0997">Cell inner membrane</keyword>
<keyword id="KW-1003">Cell membrane</keyword>
<keyword id="KW-0406">Ion transport</keyword>
<keyword id="KW-0472">Membrane</keyword>
<keyword id="KW-0630">Potassium</keyword>
<keyword id="KW-0633">Potassium transport</keyword>
<keyword id="KW-0812">Transmembrane</keyword>
<keyword id="KW-1133">Transmembrane helix</keyword>
<keyword id="KW-0813">Transport</keyword>
<sequence>MDADSINSFFLIGALLAAVSVLLSPVSSRLGIPILLIFLAVGILAGEDGPGGILFDDYSTAYLVSNLALAIILLDGGMRTRVASFRVALWPALSLATFGVAITTSITGVMAAWLFDLHWLQGLLVGAIVGSTDAAAVFSLLKGRSLNERVGATLEIESGSNDPMAVFLTVTLIAILGNVDAELSASFMLISFIKQFGLGIFLGLGGGWLLWKLVNLSKLAEGLYSILVLSGGLMIYAASNKLGGSGILSIYLVGLFLGNKPTRGRHSILNVLDGMTWVSQIGMFLVLGLLLTPSDLLDIWLPGLALAFGMILFARPLAVWLSLLPFKSFSSRDRWFISWVGLRGAVPIILAVFPMMAGLPGAQLYFNLAFFVVLVSLLVQGASLTTAARLAKVELPPKPLPISRSGVEIYPSSEWEVFVYRLSENKWCIGEPLKRLSMPDGTRIAAVFRHNTLLHPSGSTCLEAGDILCVLGQEKSLEALSNLFSQAPETKEVPRFFGDFFIDTEVKLLDLAPIYGLELDEATGDMTVADLVAAELGSHPVLGDQFLWQSLHWVVAGLYEGKVTNVGIRLPAEA</sequence>
<gene>
    <name evidence="1" type="primary">nhaP2</name>
    <name type="synonym">cvrA</name>
    <name type="ordered locus">Shewmr7_0884</name>
</gene>
<feature type="chain" id="PRO_0000278160" description="K(+)/H(+) antiporter NhaP2">
    <location>
        <begin position="1"/>
        <end position="574"/>
    </location>
</feature>
<feature type="transmembrane region" description="Helical" evidence="1">
    <location>
        <begin position="6"/>
        <end position="26"/>
    </location>
</feature>
<feature type="transmembrane region" description="Helical" evidence="1">
    <location>
        <begin position="34"/>
        <end position="54"/>
    </location>
</feature>
<feature type="transmembrane region" description="Helical" evidence="1">
    <location>
        <begin position="58"/>
        <end position="78"/>
    </location>
</feature>
<feature type="transmembrane region" description="Helical" evidence="1">
    <location>
        <begin position="87"/>
        <end position="107"/>
    </location>
</feature>
<feature type="transmembrane region" description="Helical" evidence="1">
    <location>
        <begin position="109"/>
        <end position="129"/>
    </location>
</feature>
<feature type="transmembrane region" description="Helical" evidence="1">
    <location>
        <begin position="173"/>
        <end position="193"/>
    </location>
</feature>
<feature type="transmembrane region" description="Helical" evidence="1">
    <location>
        <begin position="196"/>
        <end position="216"/>
    </location>
</feature>
<feature type="transmembrane region" description="Helical" evidence="1">
    <location>
        <begin position="219"/>
        <end position="239"/>
    </location>
</feature>
<feature type="transmembrane region" description="Helical" evidence="1">
    <location>
        <begin position="242"/>
        <end position="262"/>
    </location>
</feature>
<feature type="transmembrane region" description="Helical" evidence="1">
    <location>
        <begin position="271"/>
        <end position="291"/>
    </location>
</feature>
<feature type="transmembrane region" description="Helical" evidence="1">
    <location>
        <begin position="299"/>
        <end position="319"/>
    </location>
</feature>
<feature type="transmembrane region" description="Helical" evidence="1">
    <location>
        <begin position="335"/>
        <end position="355"/>
    </location>
</feature>
<feature type="transmembrane region" description="Helical" evidence="1">
    <location>
        <begin position="359"/>
        <end position="379"/>
    </location>
</feature>
<feature type="domain" description="RCK C-terminal" evidence="1">
    <location>
        <begin position="405"/>
        <end position="486"/>
    </location>
</feature>
<evidence type="ECO:0000255" key="1">
    <source>
        <dbReference type="HAMAP-Rule" id="MF_01075"/>
    </source>
</evidence>
<accession>Q0HYC2</accession>
<comment type="function">
    <text evidence="1">K(+)/H(+) antiporter that extrudes potassium in exchange for external protons and maintains the internal concentration of potassium under toxic levels.</text>
</comment>
<comment type="catalytic activity">
    <reaction evidence="1">
        <text>K(+)(in) + H(+)(out) = K(+)(out) + H(+)(in)</text>
        <dbReference type="Rhea" id="RHEA:29467"/>
        <dbReference type="ChEBI" id="CHEBI:15378"/>
        <dbReference type="ChEBI" id="CHEBI:29103"/>
    </reaction>
    <physiologicalReaction direction="left-to-right" evidence="1">
        <dbReference type="Rhea" id="RHEA:29468"/>
    </physiologicalReaction>
</comment>
<comment type="subcellular location">
    <subcellularLocation>
        <location evidence="1">Cell inner membrane</location>
        <topology evidence="1">Multi-pass membrane protein</topology>
    </subcellularLocation>
</comment>
<comment type="similarity">
    <text evidence="1">Belongs to the monovalent cation:proton antiporter 1 (CPA1) transporter (TC 2.A.36) family. NhaP2 subfamily.</text>
</comment>